<reference key="1">
    <citation type="submission" date="2008-06" db="EMBL/GenBank/DDBJ databases">
        <title>Complete sequence of Pelodictyon phaeoclathratiforme BU-1.</title>
        <authorList>
            <consortium name="US DOE Joint Genome Institute"/>
            <person name="Lucas S."/>
            <person name="Copeland A."/>
            <person name="Lapidus A."/>
            <person name="Glavina del Rio T."/>
            <person name="Dalin E."/>
            <person name="Tice H."/>
            <person name="Bruce D."/>
            <person name="Goodwin L."/>
            <person name="Pitluck S."/>
            <person name="Schmutz J."/>
            <person name="Larimer F."/>
            <person name="Land M."/>
            <person name="Hauser L."/>
            <person name="Kyrpides N."/>
            <person name="Mikhailova N."/>
            <person name="Liu Z."/>
            <person name="Li T."/>
            <person name="Zhao F."/>
            <person name="Overmann J."/>
            <person name="Bryant D.A."/>
            <person name="Richardson P."/>
        </authorList>
    </citation>
    <scope>NUCLEOTIDE SEQUENCE [LARGE SCALE GENOMIC DNA]</scope>
    <source>
        <strain>DSM 5477 / BU-1</strain>
    </source>
</reference>
<feature type="chain" id="PRO_1000095304" description="Aspartyl/glutamyl-tRNA(Asn/Gln) amidotransferase subunit C">
    <location>
        <begin position="1"/>
        <end position="95"/>
    </location>
</feature>
<sequence length="95" mass="10699">MSVTTKDVTYIAELAKLKFSDDEMLTMTSELNNILHYVEKLNEVDTEGVLPLSTIHDAVNVLREDVEHQPLSSTAVLLNAPDRQDRFFKVPKVIG</sequence>
<protein>
    <recommendedName>
        <fullName evidence="1">Aspartyl/glutamyl-tRNA(Asn/Gln) amidotransferase subunit C</fullName>
        <shortName evidence="1">Asp/Glu-ADT subunit C</shortName>
        <ecNumber evidence="1">6.3.5.-</ecNumber>
    </recommendedName>
</protein>
<accession>B4SES8</accession>
<evidence type="ECO:0000255" key="1">
    <source>
        <dbReference type="HAMAP-Rule" id="MF_00122"/>
    </source>
</evidence>
<organism>
    <name type="scientific">Pelodictyon phaeoclathratiforme (strain DSM 5477 / BU-1)</name>
    <dbReference type="NCBI Taxonomy" id="324925"/>
    <lineage>
        <taxon>Bacteria</taxon>
        <taxon>Pseudomonadati</taxon>
        <taxon>Chlorobiota</taxon>
        <taxon>Chlorobiia</taxon>
        <taxon>Chlorobiales</taxon>
        <taxon>Chlorobiaceae</taxon>
        <taxon>Chlorobium/Pelodictyon group</taxon>
        <taxon>Pelodictyon</taxon>
    </lineage>
</organism>
<name>GATC_PELPB</name>
<dbReference type="EC" id="6.3.5.-" evidence="1"/>
<dbReference type="EMBL" id="CP001110">
    <property type="protein sequence ID" value="ACF44604.1"/>
    <property type="molecule type" value="Genomic_DNA"/>
</dbReference>
<dbReference type="RefSeq" id="WP_012509078.1">
    <property type="nucleotide sequence ID" value="NC_011060.1"/>
</dbReference>
<dbReference type="SMR" id="B4SES8"/>
<dbReference type="STRING" id="324925.Ppha_2416"/>
<dbReference type="KEGG" id="pph:Ppha_2416"/>
<dbReference type="eggNOG" id="COG0721">
    <property type="taxonomic scope" value="Bacteria"/>
</dbReference>
<dbReference type="HOGENOM" id="CLU_105899_1_2_10"/>
<dbReference type="OrthoDB" id="9813938at2"/>
<dbReference type="Proteomes" id="UP000002724">
    <property type="component" value="Chromosome"/>
</dbReference>
<dbReference type="GO" id="GO:0050566">
    <property type="term" value="F:asparaginyl-tRNA synthase (glutamine-hydrolyzing) activity"/>
    <property type="evidence" value="ECO:0007669"/>
    <property type="project" value="RHEA"/>
</dbReference>
<dbReference type="GO" id="GO:0005524">
    <property type="term" value="F:ATP binding"/>
    <property type="evidence" value="ECO:0007669"/>
    <property type="project" value="UniProtKB-KW"/>
</dbReference>
<dbReference type="GO" id="GO:0050567">
    <property type="term" value="F:glutaminyl-tRNA synthase (glutamine-hydrolyzing) activity"/>
    <property type="evidence" value="ECO:0007669"/>
    <property type="project" value="UniProtKB-UniRule"/>
</dbReference>
<dbReference type="GO" id="GO:0070681">
    <property type="term" value="P:glutaminyl-tRNAGln biosynthesis via transamidation"/>
    <property type="evidence" value="ECO:0007669"/>
    <property type="project" value="TreeGrafter"/>
</dbReference>
<dbReference type="GO" id="GO:0006450">
    <property type="term" value="P:regulation of translational fidelity"/>
    <property type="evidence" value="ECO:0007669"/>
    <property type="project" value="InterPro"/>
</dbReference>
<dbReference type="GO" id="GO:0006412">
    <property type="term" value="P:translation"/>
    <property type="evidence" value="ECO:0007669"/>
    <property type="project" value="UniProtKB-UniRule"/>
</dbReference>
<dbReference type="Gene3D" id="1.10.20.60">
    <property type="entry name" value="Glu-tRNAGln amidotransferase C subunit, N-terminal domain"/>
    <property type="match status" value="1"/>
</dbReference>
<dbReference type="HAMAP" id="MF_00122">
    <property type="entry name" value="GatC"/>
    <property type="match status" value="1"/>
</dbReference>
<dbReference type="InterPro" id="IPR036113">
    <property type="entry name" value="Asp/Glu-ADT_sf_sub_c"/>
</dbReference>
<dbReference type="InterPro" id="IPR003837">
    <property type="entry name" value="GatC"/>
</dbReference>
<dbReference type="NCBIfam" id="TIGR00135">
    <property type="entry name" value="gatC"/>
    <property type="match status" value="1"/>
</dbReference>
<dbReference type="PANTHER" id="PTHR15004">
    <property type="entry name" value="GLUTAMYL-TRNA(GLN) AMIDOTRANSFERASE SUBUNIT C, MITOCHONDRIAL"/>
    <property type="match status" value="1"/>
</dbReference>
<dbReference type="PANTHER" id="PTHR15004:SF0">
    <property type="entry name" value="GLUTAMYL-TRNA(GLN) AMIDOTRANSFERASE SUBUNIT C, MITOCHONDRIAL"/>
    <property type="match status" value="1"/>
</dbReference>
<dbReference type="Pfam" id="PF02686">
    <property type="entry name" value="GatC"/>
    <property type="match status" value="1"/>
</dbReference>
<dbReference type="SUPFAM" id="SSF141000">
    <property type="entry name" value="Glu-tRNAGln amidotransferase C subunit"/>
    <property type="match status" value="1"/>
</dbReference>
<proteinExistence type="inferred from homology"/>
<gene>
    <name evidence="1" type="primary">gatC</name>
    <name type="ordered locus">Ppha_2416</name>
</gene>
<comment type="function">
    <text evidence="1">Allows the formation of correctly charged Asn-tRNA(Asn) or Gln-tRNA(Gln) through the transamidation of misacylated Asp-tRNA(Asn) or Glu-tRNA(Gln) in organisms which lack either or both of asparaginyl-tRNA or glutaminyl-tRNA synthetases. The reaction takes place in the presence of glutamine and ATP through an activated phospho-Asp-tRNA(Asn) or phospho-Glu-tRNA(Gln).</text>
</comment>
<comment type="catalytic activity">
    <reaction evidence="1">
        <text>L-glutamyl-tRNA(Gln) + L-glutamine + ATP + H2O = L-glutaminyl-tRNA(Gln) + L-glutamate + ADP + phosphate + H(+)</text>
        <dbReference type="Rhea" id="RHEA:17521"/>
        <dbReference type="Rhea" id="RHEA-COMP:9681"/>
        <dbReference type="Rhea" id="RHEA-COMP:9684"/>
        <dbReference type="ChEBI" id="CHEBI:15377"/>
        <dbReference type="ChEBI" id="CHEBI:15378"/>
        <dbReference type="ChEBI" id="CHEBI:29985"/>
        <dbReference type="ChEBI" id="CHEBI:30616"/>
        <dbReference type="ChEBI" id="CHEBI:43474"/>
        <dbReference type="ChEBI" id="CHEBI:58359"/>
        <dbReference type="ChEBI" id="CHEBI:78520"/>
        <dbReference type="ChEBI" id="CHEBI:78521"/>
        <dbReference type="ChEBI" id="CHEBI:456216"/>
    </reaction>
</comment>
<comment type="catalytic activity">
    <reaction evidence="1">
        <text>L-aspartyl-tRNA(Asn) + L-glutamine + ATP + H2O = L-asparaginyl-tRNA(Asn) + L-glutamate + ADP + phosphate + 2 H(+)</text>
        <dbReference type="Rhea" id="RHEA:14513"/>
        <dbReference type="Rhea" id="RHEA-COMP:9674"/>
        <dbReference type="Rhea" id="RHEA-COMP:9677"/>
        <dbReference type="ChEBI" id="CHEBI:15377"/>
        <dbReference type="ChEBI" id="CHEBI:15378"/>
        <dbReference type="ChEBI" id="CHEBI:29985"/>
        <dbReference type="ChEBI" id="CHEBI:30616"/>
        <dbReference type="ChEBI" id="CHEBI:43474"/>
        <dbReference type="ChEBI" id="CHEBI:58359"/>
        <dbReference type="ChEBI" id="CHEBI:78515"/>
        <dbReference type="ChEBI" id="CHEBI:78516"/>
        <dbReference type="ChEBI" id="CHEBI:456216"/>
    </reaction>
</comment>
<comment type="subunit">
    <text evidence="1">Heterotrimer of A, B and C subunits.</text>
</comment>
<comment type="similarity">
    <text evidence="1">Belongs to the GatC family.</text>
</comment>
<keyword id="KW-0067">ATP-binding</keyword>
<keyword id="KW-0436">Ligase</keyword>
<keyword id="KW-0547">Nucleotide-binding</keyword>
<keyword id="KW-0648">Protein biosynthesis</keyword>
<keyword id="KW-1185">Reference proteome</keyword>